<evidence type="ECO:0000250" key="1"/>
<evidence type="ECO:0000250" key="2">
    <source>
        <dbReference type="UniProtKB" id="P24939"/>
    </source>
</evidence>
<evidence type="ECO:0000250" key="3">
    <source>
        <dbReference type="UniProtKB" id="P24940"/>
    </source>
</evidence>
<evidence type="ECO:0000256" key="4">
    <source>
        <dbReference type="SAM" id="MobiDB-lite"/>
    </source>
</evidence>
<evidence type="ECO:0000305" key="5"/>
<proteinExistence type="evidence at transcript level"/>
<organism>
    <name type="scientific">Human adenovirus F serotype 40</name>
    <name type="common">HAdV-40</name>
    <name type="synonym">Human adenovirus 40</name>
    <dbReference type="NCBI Taxonomy" id="28284"/>
    <lineage>
        <taxon>Viruses</taxon>
        <taxon>Varidnaviria</taxon>
        <taxon>Bamfordvirae</taxon>
        <taxon>Preplasmiviricota</taxon>
        <taxon>Tectiliviricetes</taxon>
        <taxon>Rowavirales</taxon>
        <taxon>Adenoviridae</taxon>
        <taxon>Mastadenovirus</taxon>
        <taxon>Human mastadenovirus F</taxon>
    </lineage>
</organism>
<gene>
    <name type="ORF">L4</name>
</gene>
<comment type="function">
    <text evidence="1">Promotes alternative splicing of late transcripts by promoting splicing at weak 3' splice sites. Required for the temporal activation of major late pre-mRNA splicing at late times of infection. Induces the splicing and expression of the late capsid vertex protein (By similarity).</text>
</comment>
<comment type="function">
    <text evidence="3">Probably functions as the small terminase that is part of the molecular motor that translocates genomic DNA in empty capsid during DNA packaging. This motor is located at a unique vertex and comprises at least the IVa2 ATPase, the small terminase 33K and probably a portal. Forms a ring-like structure of about 17 nm in which genomic DNA is translocated into the capsid. Stimulates IVa2 ATPase activity in the presence of the viral genome. Once the DNA is packaged, the terminase detaches: the 33K protein is present in the empty particles, but not in the mature virions. Also involved in virion assembly.</text>
</comment>
<comment type="subunit">
    <text evidence="3">Homooligomer. Interacts with DBP; this interaction occurs at a unique vertex during genome packaging. Interacts with IVa2; this interaction occurs at a unique vertex during genome packaging and seems to potentiate IVa2 and 33K oligomerization.</text>
</comment>
<comment type="subcellular location">
    <subcellularLocation>
        <location evidence="3">Host nucleus</location>
    </subcellularLocation>
    <text evidence="3">At late time of infection, reorganized from the nuclear margin to ring-like structures at viral replication centers.</text>
</comment>
<comment type="alternative products">
    <event type="alternative splicing"/>
    <isoform>
        <id>P11805-1</id>
        <name>Protein 33K</name>
        <name>Splicing factor 33K</name>
        <name>L4-33K</name>
        <sequence type="displayed"/>
    </isoform>
    <isoform>
        <id>P11805-2</id>
        <name>Packaging protein 2</name>
        <name>Packaging protein 22K</name>
        <name>L4-22K</name>
        <sequence type="not described"/>
    </isoform>
</comment>
<comment type="induction">
    <text>Expressed in the late phase of the viral replicative cycle.</text>
</comment>
<comment type="domain">
    <text evidence="1">The tiny Arg-Ser repeat region (RS repeat) is necessary for the splicing enhancer function.</text>
</comment>
<comment type="PTM">
    <text evidence="1">Phosphorylated in vitro by human PKA and PRKDC. PRKDC inhibits, whereas PKA activates the splicing factor (By similarity).</text>
</comment>
<comment type="miscellaneous">
    <text evidence="1">All late proteins expressed from the major late promoter are produced by alternative splicing and alternative polyadenylation of the same gene giving rise to non-overlapping ORFs. Expression of packaging protein 2 and splicing factor is controlled by a L4 promoter distinct from the major late promoter (By similarity).</text>
</comment>
<comment type="miscellaneous">
    <molecule>Isoform Protein 33K</molecule>
    <text>Spliced isoform.</text>
</comment>
<comment type="miscellaneous">
    <molecule>Isoform Packaging protein 2</molecule>
    <text evidence="5">Unspliced isoform.</text>
</comment>
<comment type="similarity">
    <text evidence="5">Belongs to the adenoviridae splicing factor family.</text>
</comment>
<keyword id="KW-0025">Alternative splicing</keyword>
<keyword id="KW-1048">Host nucleus</keyword>
<keyword id="KW-0945">Host-virus interaction</keyword>
<keyword id="KW-0426">Late protein</keyword>
<keyword id="KW-0507">mRNA processing</keyword>
<keyword id="KW-0597">Phosphoprotein</keyword>
<keyword id="KW-1185">Reference proteome</keyword>
<keyword id="KW-0118">Viral capsid assembly</keyword>
<keyword id="KW-0231">Viral genome packaging</keyword>
<keyword id="KW-1188">Viral release from host cell</keyword>
<name>SF33K_ADE40</name>
<dbReference type="EMBL" id="L19443">
    <property type="protein sequence ID" value="AAC13956.1"/>
    <property type="molecule type" value="Genomic_DNA"/>
</dbReference>
<dbReference type="EMBL" id="M19316">
    <property type="protein sequence ID" value="AAA52199.1"/>
    <property type="molecule type" value="Genomic_DNA"/>
</dbReference>
<dbReference type="DNASU" id="2715920"/>
<dbReference type="Proteomes" id="UP000151954">
    <property type="component" value="Segment"/>
</dbReference>
<dbReference type="GO" id="GO:0042025">
    <property type="term" value="C:host cell nucleus"/>
    <property type="evidence" value="ECO:0007669"/>
    <property type="project" value="UniProtKB-SubCell"/>
</dbReference>
<dbReference type="GO" id="GO:0006397">
    <property type="term" value="P:mRNA processing"/>
    <property type="evidence" value="ECO:0007669"/>
    <property type="project" value="UniProtKB-KW"/>
</dbReference>
<dbReference type="GO" id="GO:0019073">
    <property type="term" value="P:viral DNA genome packaging"/>
    <property type="evidence" value="ECO:0007669"/>
    <property type="project" value="InterPro"/>
</dbReference>
<dbReference type="InterPro" id="IPR021304">
    <property type="entry name" value="Adeno_L4-33K/L4-22K"/>
</dbReference>
<dbReference type="Pfam" id="PF11081">
    <property type="entry name" value="Adeno_L433K_22K"/>
    <property type="match status" value="1"/>
</dbReference>
<accession>P11805</accession>
<feature type="chain" id="PRO_0000221913" description="Protein 33K">
    <location>
        <begin position="1"/>
        <end position="211"/>
    </location>
</feature>
<feature type="region of interest" description="Disordered" evidence="4">
    <location>
        <begin position="1"/>
        <end position="95"/>
    </location>
</feature>
<feature type="region of interest" description="Disordered" evidence="4">
    <location>
        <begin position="107"/>
        <end position="140"/>
    </location>
</feature>
<feature type="region of interest" description="Necessary for nuclear subcellular location" evidence="1">
    <location>
        <begin position="154"/>
        <end position="181"/>
    </location>
</feature>
<feature type="region of interest" description="RS-repeat; required for splicing enhancer activity" evidence="1">
    <location>
        <begin position="160"/>
        <end position="180"/>
    </location>
</feature>
<feature type="compositionally biased region" description="Acidic residues" evidence="4">
    <location>
        <begin position="24"/>
        <end position="65"/>
    </location>
</feature>
<feature type="compositionally biased region" description="Pro residues" evidence="4">
    <location>
        <begin position="83"/>
        <end position="92"/>
    </location>
</feature>
<feature type="compositionally biased region" description="Polar residues" evidence="4">
    <location>
        <begin position="129"/>
        <end position="140"/>
    </location>
</feature>
<sequence length="211" mass="24162">MPPKGNKHPIAQRQSQQKLQKQWDEEETWDDSQAEEVSDEEAEEQMESWDSLDEEDLEDVEEETIASDKAPSFKKPVRSQPPKTIPPLPPQPCSLKASRRWDTVSIAGSPTAPAAPTKRLEKTPRVRKTSSAIATRQDSPATQELRKRIFPTLYAIFQQSRGQQLELKVKNRSLRSLTRSCLYHRSEDQLQRTLEDAEALFNKYCSVSLKD</sequence>
<organismHost>
    <name type="scientific">Homo sapiens</name>
    <name type="common">Human</name>
    <dbReference type="NCBI Taxonomy" id="9606"/>
</organismHost>
<reference key="1">
    <citation type="journal article" date="1993" name="J. Mol. Biol.">
        <title>The DNA sequence of adenovirus type 40.</title>
        <authorList>
            <person name="Davison A.J."/>
            <person name="Telford E.A."/>
            <person name="Watson M.S."/>
            <person name="McBride K."/>
            <person name="Mautner V."/>
        </authorList>
    </citation>
    <scope>NUCLEOTIDE SEQUENCE [LARGE SCALE GENOMIC DNA]</scope>
    <source>
        <strain>Dugan</strain>
    </source>
</reference>
<reference key="2">
    <citation type="journal article" date="1988" name="Virology">
        <title>The genes encoding the DNA binding protein and the 23K protease of adenovirus types 40 and 41.</title>
        <authorList>
            <person name="Vos H.L."/>
            <person name="der Lee F.M."/>
            <person name="Reemst A.M.C.B."/>
            <person name="van Loon A.E."/>
            <person name="Sussenbach J.S."/>
        </authorList>
    </citation>
    <scope>NUCLEOTIDE SEQUENCE [GENOMIC DNA] OF 176-211</scope>
</reference>
<protein>
    <recommendedName>
        <fullName evidence="2">Protein 33K</fullName>
        <shortName>L4-33K</shortName>
    </recommendedName>
    <alternativeName>
        <fullName evidence="5">Splicing factor 33K</fullName>
    </alternativeName>
    <alternativeName>
        <fullName evidence="3">Terminase, small subunit</fullName>
    </alternativeName>
</protein>